<protein>
    <recommendedName>
        <fullName evidence="15">Amyloid beta precursor like protein 1</fullName>
    </recommendedName>
    <alternativeName>
        <fullName evidence="3">Amyloid beta (A4) precursor-like protein 1</fullName>
    </alternativeName>
    <alternativeName>
        <fullName evidence="15">Amyloid-like protein 1</fullName>
        <shortName evidence="15">APLP</shortName>
        <shortName>APLP-1</shortName>
    </alternativeName>
    <component>
        <recommendedName>
            <fullName>C30</fullName>
        </recommendedName>
    </component>
</protein>
<organism>
    <name type="scientific">Homo sapiens</name>
    <name type="common">Human</name>
    <dbReference type="NCBI Taxonomy" id="9606"/>
    <lineage>
        <taxon>Eukaryota</taxon>
        <taxon>Metazoa</taxon>
        <taxon>Chordata</taxon>
        <taxon>Craniata</taxon>
        <taxon>Vertebrata</taxon>
        <taxon>Euteleostomi</taxon>
        <taxon>Mammalia</taxon>
        <taxon>Eutheria</taxon>
        <taxon>Euarchontoglires</taxon>
        <taxon>Primates</taxon>
        <taxon>Haplorrhini</taxon>
        <taxon>Catarrhini</taxon>
        <taxon>Hominidae</taxon>
        <taxon>Homo</taxon>
    </lineage>
</organism>
<accession>P51693</accession>
<accession>O00113</accession>
<accession>Q96A92</accession>
<sequence>MGPASPAARGLSRRPGQPPLPLLLPLLLLLLRAQPAIGSLAGGSPGAAEAPGSAQVAGLCGRLTLHRDLRTGRWEPDPQRSRRCLRDPQRVLEYCRQMYPELQIARVEQATQAIPMERWCGGSRSGSCAHPHHQVVPFRCLPGEFVSEALLVPEGCRFLHQERMDQCESSTRRHQEAQEACSSQGLILHGSGMLLPCGSDRFRGVEYVCCPPPGTPDPSGTAVGDPSTRSWPPGSRVEGAEDEEEEESFPQPVDDYFVEPPQAEEEEETVPPPSSHTLAVVGKVTPTPRPTDGVDIYFGMPGEISEHEGFLRAKMDLEERRMRQINEVMREWAMADNQSKNLPKADRQALNEHFQSILQTLEEQVSGERQRLVETHATRVIALINDQRRAALEGFLAALQADPPQAERVLLALRRYLRAEQKEQRHTLRHYQHVAAVDPEKAQQMRFQVHTHLQVIEERVNQSLGLLDQNPHLAQELRPQIQELLHSEHLGPSELEAPAPGGSSEDKGGLQPPDSKDDTPMTLPKGSTEQDAASPEKEKMNPLEQYERKVNASVPRGFPFHSSEIQRDELAPAGTGVSREAVSGLLIMGAGGGSLIVLSMLLLRRKKPYGAISHGVVEVDPMLTLEEQQLRELQRHGYENPTYRFLEERP</sequence>
<dbReference type="EMBL" id="U48437">
    <property type="protein sequence ID" value="AAB96331.1"/>
    <property type="molecule type" value="mRNA"/>
</dbReference>
<dbReference type="EMBL" id="AD000864">
    <property type="protein sequence ID" value="AAB50173.1"/>
    <property type="molecule type" value="Genomic_DNA"/>
</dbReference>
<dbReference type="EMBL" id="BC012889">
    <property type="protein sequence ID" value="AAH12889.1"/>
    <property type="molecule type" value="mRNA"/>
</dbReference>
<dbReference type="EMBL" id="BC013850">
    <property type="status" value="NOT_ANNOTATED_CDS"/>
    <property type="molecule type" value="mRNA"/>
</dbReference>
<dbReference type="CCDS" id="CCDS32997.1">
    <molecule id="P51693-2"/>
</dbReference>
<dbReference type="CCDS" id="CCDS92600.1">
    <molecule id="P51693-1"/>
</dbReference>
<dbReference type="RefSeq" id="NP_001019978.1">
    <molecule id="P51693-2"/>
    <property type="nucleotide sequence ID" value="NM_001024807.3"/>
</dbReference>
<dbReference type="RefSeq" id="NP_005157.1">
    <molecule id="P51693-1"/>
    <property type="nucleotide sequence ID" value="NM_005166.5"/>
</dbReference>
<dbReference type="PDB" id="3PMR">
    <property type="method" value="X-ray"/>
    <property type="resolution" value="2.11 A"/>
    <property type="chains" value="A/B=285-499"/>
</dbReference>
<dbReference type="PDB" id="3Q7G">
    <property type="method" value="X-ray"/>
    <property type="resolution" value="2.30 A"/>
    <property type="chains" value="A/B=285-494"/>
</dbReference>
<dbReference type="PDB" id="3Q7L">
    <property type="method" value="X-ray"/>
    <property type="resolution" value="2.20 A"/>
    <property type="chains" value="A/B=285-494"/>
</dbReference>
<dbReference type="PDB" id="3QMK">
    <property type="method" value="X-ray"/>
    <property type="resolution" value="2.21 A"/>
    <property type="chains" value="A/B=285-494"/>
</dbReference>
<dbReference type="PDB" id="4RD9">
    <property type="method" value="X-ray"/>
    <property type="resolution" value="2.60 A"/>
    <property type="chains" value="A/B=292-494"/>
</dbReference>
<dbReference type="PDB" id="4RDA">
    <property type="method" value="X-ray"/>
    <property type="resolution" value="2.50 A"/>
    <property type="chains" value="A/B=290-495"/>
</dbReference>
<dbReference type="PDBsum" id="3PMR"/>
<dbReference type="PDBsum" id="3Q7G"/>
<dbReference type="PDBsum" id="3Q7L"/>
<dbReference type="PDBsum" id="3QMK"/>
<dbReference type="PDBsum" id="4RD9"/>
<dbReference type="PDBsum" id="4RDA"/>
<dbReference type="SMR" id="P51693"/>
<dbReference type="BioGRID" id="106830">
    <property type="interactions" value="53"/>
</dbReference>
<dbReference type="CORUM" id="P51693"/>
<dbReference type="DIP" id="DIP-30846N"/>
<dbReference type="FunCoup" id="P51693">
    <property type="interactions" value="800"/>
</dbReference>
<dbReference type="IntAct" id="P51693">
    <property type="interactions" value="50"/>
</dbReference>
<dbReference type="MINT" id="P51693"/>
<dbReference type="STRING" id="9606.ENSP00000221891"/>
<dbReference type="DrugBank" id="DB09130">
    <property type="generic name" value="Copper"/>
</dbReference>
<dbReference type="DrugBank" id="DB01593">
    <property type="generic name" value="Zinc"/>
</dbReference>
<dbReference type="DrugBank" id="DB14487">
    <property type="generic name" value="Zinc acetate"/>
</dbReference>
<dbReference type="DrugBank" id="DB14533">
    <property type="generic name" value="Zinc chloride"/>
</dbReference>
<dbReference type="DrugBank" id="DB14548">
    <property type="generic name" value="Zinc sulfate, unspecified form"/>
</dbReference>
<dbReference type="GlyConnect" id="716">
    <property type="glycosylation" value="1 O-Linked glycan (1 site)"/>
</dbReference>
<dbReference type="GlyCosmos" id="P51693">
    <property type="glycosylation" value="7 sites, 2 glycans"/>
</dbReference>
<dbReference type="GlyGen" id="P51693">
    <property type="glycosylation" value="9 sites, 1 N-linked glycan (1 site), 2 O-linked glycans (2 sites)"/>
</dbReference>
<dbReference type="iPTMnet" id="P51693"/>
<dbReference type="PhosphoSitePlus" id="P51693"/>
<dbReference type="BioMuta" id="APLP1"/>
<dbReference type="DMDM" id="28558769"/>
<dbReference type="jPOST" id="P51693"/>
<dbReference type="MassIVE" id="P51693"/>
<dbReference type="PaxDb" id="9606-ENSP00000221891"/>
<dbReference type="PeptideAtlas" id="P51693"/>
<dbReference type="ProteomicsDB" id="56379">
    <molecule id="P51693-1"/>
</dbReference>
<dbReference type="ProteomicsDB" id="56380">
    <molecule id="P51693-2"/>
</dbReference>
<dbReference type="Pumba" id="P51693"/>
<dbReference type="TopDownProteomics" id="P51693-2">
    <molecule id="P51693-2"/>
</dbReference>
<dbReference type="Antibodypedia" id="16162">
    <property type="antibodies" value="257 antibodies from 28 providers"/>
</dbReference>
<dbReference type="DNASU" id="333"/>
<dbReference type="Ensembl" id="ENST00000221891.9">
    <molecule id="P51693-2"/>
    <property type="protein sequence ID" value="ENSP00000221891.4"/>
    <property type="gene ID" value="ENSG00000105290.14"/>
</dbReference>
<dbReference type="Ensembl" id="ENST00000652533.2">
    <molecule id="P51693-1"/>
    <property type="protein sequence ID" value="ENSP00000498366.1"/>
    <property type="gene ID" value="ENSG00000105290.14"/>
</dbReference>
<dbReference type="GeneID" id="333"/>
<dbReference type="KEGG" id="hsa:333"/>
<dbReference type="MANE-Select" id="ENST00000221891.9">
    <molecule id="P51693-2"/>
    <property type="protein sequence ID" value="ENSP00000221891.4"/>
    <property type="RefSeq nucleotide sequence ID" value="NM_001024807.3"/>
    <property type="RefSeq protein sequence ID" value="NP_001019978.1"/>
</dbReference>
<dbReference type="UCSC" id="uc002ocf.4">
    <molecule id="P51693-1"/>
    <property type="organism name" value="human"/>
</dbReference>
<dbReference type="AGR" id="HGNC:597"/>
<dbReference type="CTD" id="333"/>
<dbReference type="DisGeNET" id="333"/>
<dbReference type="GeneCards" id="APLP1"/>
<dbReference type="HGNC" id="HGNC:597">
    <property type="gene designation" value="APLP1"/>
</dbReference>
<dbReference type="HPA" id="ENSG00000105290">
    <property type="expression patterns" value="Tissue enriched (brain)"/>
</dbReference>
<dbReference type="MIM" id="104775">
    <property type="type" value="gene"/>
</dbReference>
<dbReference type="neXtProt" id="NX_P51693"/>
<dbReference type="OpenTargets" id="ENSG00000105290"/>
<dbReference type="PharmGKB" id="PA24884"/>
<dbReference type="VEuPathDB" id="HostDB:ENSG00000105290"/>
<dbReference type="eggNOG" id="KOG3540">
    <property type="taxonomic scope" value="Eukaryota"/>
</dbReference>
<dbReference type="GeneTree" id="ENSGT00530000063252"/>
<dbReference type="InParanoid" id="P51693"/>
<dbReference type="OMA" id="CLRDPQH"/>
<dbReference type="OrthoDB" id="6147836at2759"/>
<dbReference type="PAN-GO" id="P51693">
    <property type="GO annotations" value="7 GO annotations based on evolutionary models"/>
</dbReference>
<dbReference type="PhylomeDB" id="P51693"/>
<dbReference type="TreeFam" id="TF317274"/>
<dbReference type="PathwayCommons" id="P51693"/>
<dbReference type="SignaLink" id="P51693"/>
<dbReference type="BioGRID-ORCS" id="333">
    <property type="hits" value="11 hits in 1157 CRISPR screens"/>
</dbReference>
<dbReference type="ChiTaRS" id="APLP1">
    <property type="organism name" value="human"/>
</dbReference>
<dbReference type="EvolutionaryTrace" id="P51693"/>
<dbReference type="GeneWiki" id="APLP1"/>
<dbReference type="GenomeRNAi" id="333"/>
<dbReference type="Pharos" id="P51693">
    <property type="development level" value="Tbio"/>
</dbReference>
<dbReference type="PRO" id="PR:P51693"/>
<dbReference type="Proteomes" id="UP000005640">
    <property type="component" value="Chromosome 19"/>
</dbReference>
<dbReference type="RNAct" id="P51693">
    <property type="molecule type" value="protein"/>
</dbReference>
<dbReference type="Bgee" id="ENSG00000105290">
    <property type="expression patterns" value="Expressed in C1 segment of cervical spinal cord and 139 other cell types or tissues"/>
</dbReference>
<dbReference type="ExpressionAtlas" id="P51693">
    <property type="expression patterns" value="baseline and differential"/>
</dbReference>
<dbReference type="GO" id="GO:0005604">
    <property type="term" value="C:basement membrane"/>
    <property type="evidence" value="ECO:0000304"/>
    <property type="project" value="ProtInc"/>
</dbReference>
<dbReference type="GO" id="GO:0005794">
    <property type="term" value="C:Golgi apparatus"/>
    <property type="evidence" value="ECO:0000314"/>
    <property type="project" value="HPA"/>
</dbReference>
<dbReference type="GO" id="GO:0005654">
    <property type="term" value="C:nucleoplasm"/>
    <property type="evidence" value="ECO:0000314"/>
    <property type="project" value="HPA"/>
</dbReference>
<dbReference type="GO" id="GO:0048471">
    <property type="term" value="C:perinuclear region of cytoplasm"/>
    <property type="evidence" value="ECO:0000314"/>
    <property type="project" value="BHF-UCL"/>
</dbReference>
<dbReference type="GO" id="GO:0005886">
    <property type="term" value="C:plasma membrane"/>
    <property type="evidence" value="ECO:0000314"/>
    <property type="project" value="BHF-UCL"/>
</dbReference>
<dbReference type="GO" id="GO:0031694">
    <property type="term" value="F:alpha-2A adrenergic receptor binding"/>
    <property type="evidence" value="ECO:0000353"/>
    <property type="project" value="BHF-UCL"/>
</dbReference>
<dbReference type="GO" id="GO:0031695">
    <property type="term" value="F:alpha-2B adrenergic receptor binding"/>
    <property type="evidence" value="ECO:0000353"/>
    <property type="project" value="BHF-UCL"/>
</dbReference>
<dbReference type="GO" id="GO:0031696">
    <property type="term" value="F:alpha-2C adrenergic receptor binding"/>
    <property type="evidence" value="ECO:0000353"/>
    <property type="project" value="BHF-UCL"/>
</dbReference>
<dbReference type="GO" id="GO:0008201">
    <property type="term" value="F:heparin binding"/>
    <property type="evidence" value="ECO:0007669"/>
    <property type="project" value="UniProtKB-KW"/>
</dbReference>
<dbReference type="GO" id="GO:0042802">
    <property type="term" value="F:identical protein binding"/>
    <property type="evidence" value="ECO:0000353"/>
    <property type="project" value="IntAct"/>
</dbReference>
<dbReference type="GO" id="GO:0046914">
    <property type="term" value="F:transition metal ion binding"/>
    <property type="evidence" value="ECO:0007669"/>
    <property type="project" value="InterPro"/>
</dbReference>
<dbReference type="GO" id="GO:0009887">
    <property type="term" value="P:animal organ morphogenesis"/>
    <property type="evidence" value="ECO:0000304"/>
    <property type="project" value="ProtInc"/>
</dbReference>
<dbReference type="GO" id="GO:0006915">
    <property type="term" value="P:apoptotic process"/>
    <property type="evidence" value="ECO:0007669"/>
    <property type="project" value="UniProtKB-KW"/>
</dbReference>
<dbReference type="GO" id="GO:0007409">
    <property type="term" value="P:axonogenesis"/>
    <property type="evidence" value="ECO:0000318"/>
    <property type="project" value="GO_Central"/>
</dbReference>
<dbReference type="GO" id="GO:0007155">
    <property type="term" value="P:cell adhesion"/>
    <property type="evidence" value="ECO:0007669"/>
    <property type="project" value="UniProtKB-KW"/>
</dbReference>
<dbReference type="GO" id="GO:0071874">
    <property type="term" value="P:cellular response to norepinephrine stimulus"/>
    <property type="evidence" value="ECO:0000314"/>
    <property type="project" value="BHF-UCL"/>
</dbReference>
<dbReference type="GO" id="GO:0007417">
    <property type="term" value="P:central nervous system development"/>
    <property type="evidence" value="ECO:0000318"/>
    <property type="project" value="GO_Central"/>
</dbReference>
<dbReference type="GO" id="GO:0180011">
    <property type="term" value="P:cytosolic mRNA polyadenylation"/>
    <property type="evidence" value="ECO:0007669"/>
    <property type="project" value="Ensembl"/>
</dbReference>
<dbReference type="GO" id="GO:0006897">
    <property type="term" value="P:endocytosis"/>
    <property type="evidence" value="ECO:0007669"/>
    <property type="project" value="UniProtKB-KW"/>
</dbReference>
<dbReference type="GO" id="GO:0030198">
    <property type="term" value="P:extracellular matrix organization"/>
    <property type="evidence" value="ECO:0000250"/>
    <property type="project" value="ARUK-UCL"/>
</dbReference>
<dbReference type="GO" id="GO:0030900">
    <property type="term" value="P:forebrain development"/>
    <property type="evidence" value="ECO:0000250"/>
    <property type="project" value="ARUK-UCL"/>
</dbReference>
<dbReference type="GO" id="GO:0106072">
    <property type="term" value="P:negative regulation of adenylate cyclase-activating G protein-coupled receptor signaling pathway"/>
    <property type="evidence" value="ECO:0000314"/>
    <property type="project" value="BHF-UCL"/>
</dbReference>
<dbReference type="GO" id="GO:0007399">
    <property type="term" value="P:nervous system development"/>
    <property type="evidence" value="ECO:0000304"/>
    <property type="project" value="ProtInc"/>
</dbReference>
<dbReference type="GO" id="GO:0006417">
    <property type="term" value="P:regulation of translation"/>
    <property type="evidence" value="ECO:0007669"/>
    <property type="project" value="Ensembl"/>
</dbReference>
<dbReference type="CDD" id="cd21708">
    <property type="entry name" value="JMTM_APLP1"/>
    <property type="match status" value="1"/>
</dbReference>
<dbReference type="FunFam" id="1.20.120.770:FF:000001">
    <property type="entry name" value="Amyloid beta A4 protein-like isoform 1"/>
    <property type="match status" value="1"/>
</dbReference>
<dbReference type="FunFam" id="3.90.570.10:FF:000003">
    <property type="entry name" value="Amyloid beta precursor like protein 1"/>
    <property type="match status" value="1"/>
</dbReference>
<dbReference type="Gene3D" id="1.20.120.770">
    <property type="entry name" value="Amyloid precursor protein, E2 domain"/>
    <property type="match status" value="1"/>
</dbReference>
<dbReference type="Gene3D" id="3.30.1490.140">
    <property type="entry name" value="Amyloidogenic glycoprotein, copper-binding domain"/>
    <property type="match status" value="1"/>
</dbReference>
<dbReference type="Gene3D" id="3.90.570.10">
    <property type="entry name" value="Amyloidogenic glycoprotein, heparin-binding domain"/>
    <property type="match status" value="1"/>
</dbReference>
<dbReference type="InterPro" id="IPR036669">
    <property type="entry name" value="Amyloid_Cu-bd_sf"/>
</dbReference>
<dbReference type="InterPro" id="IPR008155">
    <property type="entry name" value="Amyloid_glyco"/>
</dbReference>
<dbReference type="InterPro" id="IPR011178">
    <property type="entry name" value="Amyloid_glyco_Cu-bd"/>
</dbReference>
<dbReference type="InterPro" id="IPR024329">
    <property type="entry name" value="Amyloid_glyco_E2_domain"/>
</dbReference>
<dbReference type="InterPro" id="IPR008154">
    <property type="entry name" value="Amyloid_glyco_extra"/>
</dbReference>
<dbReference type="InterPro" id="IPR015849">
    <property type="entry name" value="Amyloid_glyco_heparin-bd"/>
</dbReference>
<dbReference type="InterPro" id="IPR036454">
    <property type="entry name" value="Amyloid_glyco_heparin-bd_sf"/>
</dbReference>
<dbReference type="InterPro" id="IPR019745">
    <property type="entry name" value="Amyloid_glyco_intracell_CS"/>
</dbReference>
<dbReference type="InterPro" id="IPR019543">
    <property type="entry name" value="APP_amyloid_C"/>
</dbReference>
<dbReference type="InterPro" id="IPR019744">
    <property type="entry name" value="APP_CUBD_CS"/>
</dbReference>
<dbReference type="InterPro" id="IPR036176">
    <property type="entry name" value="E2_sf"/>
</dbReference>
<dbReference type="PANTHER" id="PTHR23103">
    <property type="entry name" value="ALZHEIMER'S DISEASE BETA-AMYLOID RELATED"/>
    <property type="match status" value="1"/>
</dbReference>
<dbReference type="PANTHER" id="PTHR23103:SF13">
    <property type="entry name" value="AMYLOID BETA PRECURSOR LIKE PROTEIN 1"/>
    <property type="match status" value="1"/>
</dbReference>
<dbReference type="Pfam" id="PF10515">
    <property type="entry name" value="APP_amyloid"/>
    <property type="match status" value="1"/>
</dbReference>
<dbReference type="Pfam" id="PF12924">
    <property type="entry name" value="APP_Cu_bd"/>
    <property type="match status" value="1"/>
</dbReference>
<dbReference type="Pfam" id="PF12925">
    <property type="entry name" value="APP_E2"/>
    <property type="match status" value="1"/>
</dbReference>
<dbReference type="Pfam" id="PF02177">
    <property type="entry name" value="APP_N"/>
    <property type="match status" value="1"/>
</dbReference>
<dbReference type="PRINTS" id="PR00203">
    <property type="entry name" value="AMYLOIDA4"/>
</dbReference>
<dbReference type="SMART" id="SM00006">
    <property type="entry name" value="A4_EXTRA"/>
    <property type="match status" value="1"/>
</dbReference>
<dbReference type="SUPFAM" id="SSF56491">
    <property type="entry name" value="A heparin-binding domain"/>
    <property type="match status" value="1"/>
</dbReference>
<dbReference type="SUPFAM" id="SSF89811">
    <property type="entry name" value="Amyloid beta a4 protein copper binding domain (domain 2)"/>
    <property type="match status" value="1"/>
</dbReference>
<dbReference type="SUPFAM" id="SSF109843">
    <property type="entry name" value="CAPPD, an extracellular domain of amyloid beta A4 protein"/>
    <property type="match status" value="1"/>
</dbReference>
<dbReference type="PROSITE" id="PS00319">
    <property type="entry name" value="APP_CUBD"/>
    <property type="match status" value="1"/>
</dbReference>
<dbReference type="PROSITE" id="PS51869">
    <property type="entry name" value="APP_E1"/>
    <property type="match status" value="1"/>
</dbReference>
<dbReference type="PROSITE" id="PS51870">
    <property type="entry name" value="APP_E2"/>
    <property type="match status" value="1"/>
</dbReference>
<dbReference type="PROSITE" id="PS00320">
    <property type="entry name" value="APP_INTRA"/>
    <property type="match status" value="1"/>
</dbReference>
<proteinExistence type="evidence at protein level"/>
<feature type="signal peptide" evidence="4">
    <location>
        <begin position="1"/>
        <end position="38"/>
    </location>
</feature>
<feature type="chain" id="PRO_0000000203" description="Amyloid beta precursor like protein 1">
    <location>
        <begin position="39"/>
        <end position="650"/>
    </location>
</feature>
<feature type="peptide" id="PRO_0000000204" description="C30" evidence="1">
    <location>
        <begin position="621"/>
        <end position="650"/>
    </location>
</feature>
<feature type="topological domain" description="Extracellular" evidence="4">
    <location>
        <begin position="39"/>
        <end position="580"/>
    </location>
</feature>
<feature type="transmembrane region" description="Helical" evidence="4">
    <location>
        <begin position="581"/>
        <end position="603"/>
    </location>
</feature>
<feature type="topological domain" description="Cytoplasmic" evidence="4">
    <location>
        <begin position="604"/>
        <end position="650"/>
    </location>
</feature>
<feature type="domain" description="E1" evidence="5">
    <location>
        <begin position="50"/>
        <end position="212"/>
    </location>
</feature>
<feature type="domain" description="E2" evidence="6">
    <location>
        <begin position="293"/>
        <end position="484"/>
    </location>
</feature>
<feature type="region of interest" description="GFLD subdomain" evidence="5">
    <location>
        <begin position="50"/>
        <end position="146"/>
    </location>
</feature>
<feature type="region of interest" description="CuBD subdomain" evidence="5">
    <location>
        <begin position="154"/>
        <end position="212"/>
    </location>
</feature>
<feature type="region of interest" description="Disordered" evidence="7">
    <location>
        <begin position="214"/>
        <end position="287"/>
    </location>
</feature>
<feature type="region of interest" description="O-glycosylated at three sites">
    <location>
        <begin position="285"/>
        <end position="305"/>
    </location>
</feature>
<feature type="region of interest" description="Heparin-binding" evidence="1">
    <location>
        <begin position="310"/>
        <end position="342"/>
    </location>
</feature>
<feature type="region of interest" description="Heparin-binding" evidence="1">
    <location>
        <begin position="410"/>
        <end position="441"/>
    </location>
</feature>
<feature type="region of interest" description="Collagen-binding" evidence="1">
    <location>
        <begin position="442"/>
        <end position="459"/>
    </location>
</feature>
<feature type="region of interest" description="Disordered" evidence="7">
    <location>
        <begin position="492"/>
        <end position="546"/>
    </location>
</feature>
<feature type="region of interest" description="Interaction with DAB1" evidence="1">
    <location>
        <begin position="632"/>
        <end position="649"/>
    </location>
</feature>
<feature type="region of interest" description="Interaction with DAB2" evidence="1">
    <location>
        <begin position="636"/>
        <end position="650"/>
    </location>
</feature>
<feature type="short sequence motif" description="Basolateral sorting signal" evidence="1">
    <location>
        <begin position="604"/>
        <end position="615"/>
    </location>
</feature>
<feature type="short sequence motif" description="Clathrin-binding" evidence="4">
    <location>
        <begin position="640"/>
        <end position="643"/>
    </location>
</feature>
<feature type="short sequence motif" description="NPXY motif; contains endocytosis signal">
    <location>
        <begin position="640"/>
        <end position="643"/>
    </location>
</feature>
<feature type="compositionally biased region" description="Basic and acidic residues" evidence="7">
    <location>
        <begin position="504"/>
        <end position="519"/>
    </location>
</feature>
<feature type="compositionally biased region" description="Basic and acidic residues" evidence="7">
    <location>
        <begin position="534"/>
        <end position="546"/>
    </location>
</feature>
<feature type="binding site" evidence="2">
    <location>
        <position position="174"/>
    </location>
    <ligand>
        <name>Cu(2+)</name>
        <dbReference type="ChEBI" id="CHEBI:29036"/>
        <label>1</label>
    </ligand>
</feature>
<feature type="binding site" evidence="2">
    <location>
        <position position="206"/>
    </location>
    <ligand>
        <name>Zn(2+)</name>
        <dbReference type="ChEBI" id="CHEBI:29105"/>
        <label>1</label>
    </ligand>
</feature>
<feature type="binding site" evidence="2">
    <location>
        <position position="209"/>
    </location>
    <ligand>
        <name>Zn(2+)</name>
        <dbReference type="ChEBI" id="CHEBI:29105"/>
        <label>1</label>
    </ligand>
</feature>
<feature type="binding site" evidence="2">
    <location>
        <position position="210"/>
    </location>
    <ligand>
        <name>Zn(2+)</name>
        <dbReference type="ChEBI" id="CHEBI:29105"/>
        <label>1</label>
    </ligand>
</feature>
<feature type="binding site" evidence="2">
    <location>
        <position position="561"/>
    </location>
    <ligand>
        <name>Cu(2+)</name>
        <dbReference type="ChEBI" id="CHEBI:29036"/>
        <label>2</label>
    </ligand>
</feature>
<feature type="binding site" evidence="2">
    <location>
        <position position="561"/>
    </location>
    <ligand>
        <name>Zn(2+)</name>
        <dbReference type="ChEBI" id="CHEBI:29105"/>
        <label>2</label>
    </ligand>
</feature>
<feature type="site" description="Cleavage; by caspase-3" evidence="1">
    <location>
        <begin position="620"/>
        <end position="621"/>
    </location>
</feature>
<feature type="glycosylation site" description="O-linked (GalNAc...) threonine" evidence="8">
    <location>
        <position position="215"/>
    </location>
</feature>
<feature type="glycosylation site" description="O-linked (GalNAc...) serine" evidence="14">
    <location>
        <position position="227"/>
    </location>
</feature>
<feature type="glycosylation site" description="O-linked (GalNAc...) threonine" evidence="14">
    <location>
        <position position="228"/>
    </location>
</feature>
<feature type="glycosylation site" description="N-linked (GlcNAc...) asparagine" evidence="4">
    <location>
        <position position="337"/>
    </location>
</feature>
<feature type="glycosylation site" description="N-linked (GlcNAc...) asparagine" evidence="4">
    <location>
        <position position="461"/>
    </location>
</feature>
<feature type="glycosylation site" description="N-linked (GlcNAc...) asparagine" evidence="4">
    <location>
        <position position="551"/>
    </location>
</feature>
<feature type="disulfide bond" evidence="5">
    <location>
        <begin position="60"/>
        <end position="84"/>
    </location>
</feature>
<feature type="disulfide bond" evidence="5">
    <location>
        <begin position="95"/>
        <end position="140"/>
    </location>
</feature>
<feature type="disulfide bond" evidence="5">
    <location>
        <begin position="120"/>
        <end position="128"/>
    </location>
</feature>
<feature type="disulfide bond" evidence="5">
    <location>
        <begin position="156"/>
        <end position="210"/>
    </location>
</feature>
<feature type="disulfide bond" evidence="5">
    <location>
        <begin position="167"/>
        <end position="197"/>
    </location>
</feature>
<feature type="disulfide bond" evidence="5">
    <location>
        <begin position="181"/>
        <end position="209"/>
    </location>
</feature>
<feature type="splice variant" id="VSP_039100" description="In isoform 2." evidence="12">
    <original>D</original>
    <variation>DA</variation>
    <location>
        <position position="517"/>
    </location>
</feature>
<feature type="mutagenesis site" description="Reduced affinity for heparin. Reduces homodimerization." evidence="9">
    <original>H</original>
    <variation>A</variation>
    <location>
        <position position="426"/>
    </location>
</feature>
<feature type="mutagenesis site" description="Strongly reduced affinity for heparin. Strongly reduced homodimerization." evidence="9">
    <original>R</original>
    <variation>A</variation>
    <location>
        <position position="429"/>
    </location>
</feature>
<feature type="mutagenesis site" description="Reduced affinity for heparin. Reduces homodimerization." evidence="9">
    <original>H</original>
    <variation>A</variation>
    <location>
        <position position="433"/>
    </location>
</feature>
<feature type="sequence conflict" description="In Ref. 1; AAB96331." evidence="13" ref="1">
    <original>A</original>
    <variation>P</variation>
    <location>
        <position position="48"/>
    </location>
</feature>
<feature type="sequence conflict" description="In Ref. 4; BC013850." evidence="13" ref="4">
    <original>P</original>
    <variation>S</variation>
    <location>
        <position position="78"/>
    </location>
</feature>
<feature type="helix" evidence="16">
    <location>
        <begin position="293"/>
        <end position="298"/>
    </location>
</feature>
<feature type="strand" evidence="17">
    <location>
        <begin position="302"/>
        <end position="304"/>
    </location>
</feature>
<feature type="helix" evidence="16">
    <location>
        <begin position="306"/>
        <end position="337"/>
    </location>
</feature>
<feature type="turn" evidence="16">
    <location>
        <begin position="338"/>
        <end position="341"/>
    </location>
</feature>
<feature type="helix" evidence="16">
    <location>
        <begin position="344"/>
        <end position="399"/>
    </location>
</feature>
<feature type="strand" evidence="16">
    <location>
        <begin position="401"/>
        <end position="403"/>
    </location>
</feature>
<feature type="helix" evidence="16">
    <location>
        <begin position="406"/>
        <end position="437"/>
    </location>
</feature>
<feature type="helix" evidence="16">
    <location>
        <begin position="439"/>
        <end position="442"/>
    </location>
</feature>
<feature type="turn" evidence="16">
    <location>
        <begin position="443"/>
        <end position="445"/>
    </location>
</feature>
<feature type="helix" evidence="16">
    <location>
        <begin position="446"/>
        <end position="467"/>
    </location>
</feature>
<feature type="helix" evidence="16">
    <location>
        <begin position="471"/>
        <end position="485"/>
    </location>
</feature>
<keyword id="KW-0002">3D-structure</keyword>
<keyword id="KW-0025">Alternative splicing</keyword>
<keyword id="KW-0053">Apoptosis</keyword>
<keyword id="KW-0130">Cell adhesion</keyword>
<keyword id="KW-1003">Cell membrane</keyword>
<keyword id="KW-0186">Copper</keyword>
<keyword id="KW-0963">Cytoplasm</keyword>
<keyword id="KW-1015">Disulfide bond</keyword>
<keyword id="KW-0254">Endocytosis</keyword>
<keyword id="KW-0325">Glycoprotein</keyword>
<keyword id="KW-0358">Heparin-binding</keyword>
<keyword id="KW-0472">Membrane</keyword>
<keyword id="KW-0479">Metal-binding</keyword>
<keyword id="KW-0523">Neurodegeneration</keyword>
<keyword id="KW-1267">Proteomics identification</keyword>
<keyword id="KW-1185">Reference proteome</keyword>
<keyword id="KW-0732">Signal</keyword>
<keyword id="KW-0812">Transmembrane</keyword>
<keyword id="KW-1133">Transmembrane helix</keyword>
<keyword id="KW-0862">Zinc</keyword>
<reference key="1">
    <citation type="journal article" date="1997" name="Eur. J. Biochem.">
        <title>Human amyloid precursor-like protein 1 -- cDNA cloning, ectopic expression in COS-7 cells and identification of soluble forms in the cerebrospinal fluid.</title>
        <authorList>
            <person name="Paliga K."/>
            <person name="Peraus G."/>
            <person name="Kreger S."/>
            <person name="Duwrrwang U."/>
            <person name="Hesse L."/>
            <person name="Multhaup G."/>
            <person name="Masters C.L."/>
            <person name="Beyreuther K."/>
            <person name="Weidemann A."/>
        </authorList>
    </citation>
    <scope>NUCLEOTIDE SEQUENCE [MRNA] (ISOFORM 1)</scope>
</reference>
<reference key="2">
    <citation type="journal article" date="1998" name="Hum. Genet.">
        <title>Structure of the human amyloid-precursor-like protein gene APLP1 at 19q13.1.</title>
        <authorList>
            <person name="Lenkkeri U."/>
            <person name="Kestila M."/>
            <person name="Lamerdin J.E."/>
            <person name="McCready P."/>
            <person name="Adamson A."/>
            <person name="Olsen A."/>
            <person name="Tryggvason K."/>
        </authorList>
    </citation>
    <scope>NUCLEOTIDE SEQUENCE [GENOMIC DNA] (ISOFORM 1)</scope>
</reference>
<reference key="3">
    <citation type="journal article" date="2004" name="Nature">
        <title>The DNA sequence and biology of human chromosome 19.</title>
        <authorList>
            <person name="Grimwood J."/>
            <person name="Gordon L.A."/>
            <person name="Olsen A.S."/>
            <person name="Terry A."/>
            <person name="Schmutz J."/>
            <person name="Lamerdin J.E."/>
            <person name="Hellsten U."/>
            <person name="Goodstein D."/>
            <person name="Couronne O."/>
            <person name="Tran-Gyamfi M."/>
            <person name="Aerts A."/>
            <person name="Altherr M."/>
            <person name="Ashworth L."/>
            <person name="Bajorek E."/>
            <person name="Black S."/>
            <person name="Branscomb E."/>
            <person name="Caenepeel S."/>
            <person name="Carrano A.V."/>
            <person name="Caoile C."/>
            <person name="Chan Y.M."/>
            <person name="Christensen M."/>
            <person name="Cleland C.A."/>
            <person name="Copeland A."/>
            <person name="Dalin E."/>
            <person name="Dehal P."/>
            <person name="Denys M."/>
            <person name="Detter J.C."/>
            <person name="Escobar J."/>
            <person name="Flowers D."/>
            <person name="Fotopulos D."/>
            <person name="Garcia C."/>
            <person name="Georgescu A.M."/>
            <person name="Glavina T."/>
            <person name="Gomez M."/>
            <person name="Gonzales E."/>
            <person name="Groza M."/>
            <person name="Hammon N."/>
            <person name="Hawkins T."/>
            <person name="Haydu L."/>
            <person name="Ho I."/>
            <person name="Huang W."/>
            <person name="Israni S."/>
            <person name="Jett J."/>
            <person name="Kadner K."/>
            <person name="Kimball H."/>
            <person name="Kobayashi A."/>
            <person name="Larionov V."/>
            <person name="Leem S.-H."/>
            <person name="Lopez F."/>
            <person name="Lou Y."/>
            <person name="Lowry S."/>
            <person name="Malfatti S."/>
            <person name="Martinez D."/>
            <person name="McCready P.M."/>
            <person name="Medina C."/>
            <person name="Morgan J."/>
            <person name="Nelson K."/>
            <person name="Nolan M."/>
            <person name="Ovcharenko I."/>
            <person name="Pitluck S."/>
            <person name="Pollard M."/>
            <person name="Popkie A.P."/>
            <person name="Predki P."/>
            <person name="Quan G."/>
            <person name="Ramirez L."/>
            <person name="Rash S."/>
            <person name="Retterer J."/>
            <person name="Rodriguez A."/>
            <person name="Rogers S."/>
            <person name="Salamov A."/>
            <person name="Salazar A."/>
            <person name="She X."/>
            <person name="Smith D."/>
            <person name="Slezak T."/>
            <person name="Solovyev V."/>
            <person name="Thayer N."/>
            <person name="Tice H."/>
            <person name="Tsai M."/>
            <person name="Ustaszewska A."/>
            <person name="Vo N."/>
            <person name="Wagner M."/>
            <person name="Wheeler J."/>
            <person name="Wu K."/>
            <person name="Xie G."/>
            <person name="Yang J."/>
            <person name="Dubchak I."/>
            <person name="Furey T.S."/>
            <person name="DeJong P."/>
            <person name="Dickson M."/>
            <person name="Gordon D."/>
            <person name="Eichler E.E."/>
            <person name="Pennacchio L.A."/>
            <person name="Richardson P."/>
            <person name="Stubbs L."/>
            <person name="Rokhsar D.S."/>
            <person name="Myers R.M."/>
            <person name="Rubin E.M."/>
            <person name="Lucas S.M."/>
        </authorList>
    </citation>
    <scope>NUCLEOTIDE SEQUENCE [LARGE SCALE GENOMIC DNA]</scope>
</reference>
<reference key="4">
    <citation type="journal article" date="2004" name="Genome Res.">
        <title>The status, quality, and expansion of the NIH full-length cDNA project: the Mammalian Gene Collection (MGC).</title>
        <authorList>
            <consortium name="The MGC Project Team"/>
        </authorList>
    </citation>
    <scope>NUCLEOTIDE SEQUENCE [LARGE SCALE MRNA] (ISOFORMS 1 AND 2)</scope>
    <source>
        <tissue>Brain</tissue>
        <tissue>Ovary</tissue>
    </source>
</reference>
<reference key="5">
    <citation type="journal article" date="1995" name="Brain Res. Mol. Brain Res.">
        <title>Selective localization of amyloid precursor-like protein 1 in the cerebral cortex postsynaptic density.</title>
        <authorList>
            <person name="Kim T.-W."/>
            <person name="Wu K."/>
            <person name="Xu J.-L."/>
            <person name="McAuliffe G."/>
            <person name="Tanzi R.E."/>
            <person name="Wasco W."/>
            <person name="Black I.B."/>
        </authorList>
    </citation>
    <scope>POSSIBLE FUNCTION</scope>
    <scope>TISSUE SPECIFICITY</scope>
</reference>
<reference key="6">
    <citation type="journal article" date="1994" name="J. Biol. Chem.">
        <title>The amyloid beta-protein precursor and its mammalian homologues. Evidence for a zinc-modulated heparin-binding superfamily.</title>
        <authorList>
            <person name="Bush A.I."/>
            <person name="Pettingell W.H. Jr."/>
            <person name="de Paradis M."/>
            <person name="Tanzi R.E."/>
            <person name="Wasco W."/>
        </authorList>
    </citation>
    <scope>HEPARIN AND ZINC-BINDING</scope>
</reference>
<reference key="7">
    <citation type="journal article" date="1999" name="J. Biol. Chem.">
        <title>Interaction of a neuron-specific protein containing PDZ domains with Alzheimer's amyloid precursor protein.</title>
        <authorList>
            <person name="Tomita S."/>
            <person name="Ozaki T."/>
            <person name="Taru H."/>
            <person name="Oguchi S."/>
            <person name="Takeda S."/>
            <person name="Yagi Y."/>
            <person name="Sakiyama S."/>
            <person name="Kirino Y."/>
            <person name="Suzuki T."/>
        </authorList>
    </citation>
    <scope>INTERACTION WITH APBA2</scope>
</reference>
<reference key="8">
    <citation type="journal article" date="2002" name="Biochemistry">
        <title>Evidence for a copper-binding superfamily of the amyloid precursor protein.</title>
        <authorList>
            <person name="Simons A."/>
            <person name="Ruppert T."/>
            <person name="Schmidt C."/>
            <person name="Schlicksupp A."/>
            <person name="Pipkorn R."/>
            <person name="Reed J."/>
            <person name="Masters C.L."/>
            <person name="White A.R."/>
            <person name="Cappai R."/>
            <person name="Beyreuther K."/>
            <person name="Bayer T.A."/>
            <person name="Multhaup G."/>
        </authorList>
    </citation>
    <scope>EXTRACELLULAR COPPER-BINDING</scope>
</reference>
<reference key="9">
    <citation type="journal article" date="2009" name="Nat. Methods">
        <title>Enrichment of glycopeptides for glycan structure and attachment site identification.</title>
        <authorList>
            <person name="Nilsson J."/>
            <person name="Rueetschi U."/>
            <person name="Halim A."/>
            <person name="Hesse C."/>
            <person name="Carlsohn E."/>
            <person name="Brinkmalm G."/>
            <person name="Larson G."/>
        </authorList>
    </citation>
    <scope>GLYCOSYLATION [LARGE SCALE ANALYSIS] AT THR-215; SER-227 AND THR-228</scope>
    <scope>STRUCTURE OF CARBOHYDRATES</scope>
    <source>
        <tissue>Cerebrospinal fluid</tissue>
    </source>
</reference>
<reference key="10">
    <citation type="journal article" date="2013" name="J. Proteome Res.">
        <title>LC-MS/MS characterization of O-glycosylation sites and glycan structures of human cerebrospinal fluid glycoproteins.</title>
        <authorList>
            <person name="Halim A."/>
            <person name="Ruetschi U."/>
            <person name="Larson G."/>
            <person name="Nilsson J."/>
        </authorList>
    </citation>
    <scope>GLYCOSYLATION</scope>
    <scope>IDENTIFICATION BY MASS SPECTROMETRY</scope>
</reference>
<reference key="11">
    <citation type="journal article" date="2011" name="Biochemistry">
        <title>The E2 Domains of APP and APLP1 Share a Conserved Mode of Dimerization.</title>
        <authorList>
            <person name="Lee S."/>
            <person name="Xue Y."/>
            <person name="Hu J."/>
            <person name="Wang Y."/>
            <person name="Liu X."/>
            <person name="Demeler B."/>
            <person name="Ha Y."/>
        </authorList>
    </citation>
    <scope>X-RAY CRYSTALLOGRAPHY (2.11 ANGSTROMS) OF 285-499</scope>
    <scope>HEPARIN-BINDING</scope>
    <scope>MUTAGENESIS OF HIS-426; ARG-429 AND HIS-433</scope>
    <scope>SUBUNIT</scope>
</reference>
<name>APLP1_HUMAN</name>
<evidence type="ECO:0000250" key="1"/>
<evidence type="ECO:0000250" key="2">
    <source>
        <dbReference type="UniProtKB" id="P05067"/>
    </source>
</evidence>
<evidence type="ECO:0000250" key="3">
    <source>
        <dbReference type="UniProtKB" id="Q03157"/>
    </source>
</evidence>
<evidence type="ECO:0000255" key="4"/>
<evidence type="ECO:0000255" key="5">
    <source>
        <dbReference type="PROSITE-ProRule" id="PRU01217"/>
    </source>
</evidence>
<evidence type="ECO:0000255" key="6">
    <source>
        <dbReference type="PROSITE-ProRule" id="PRU01218"/>
    </source>
</evidence>
<evidence type="ECO:0000256" key="7">
    <source>
        <dbReference type="SAM" id="MobiDB-lite"/>
    </source>
</evidence>
<evidence type="ECO:0000269" key="8">
    <source>
    </source>
</evidence>
<evidence type="ECO:0000269" key="9">
    <source>
    </source>
</evidence>
<evidence type="ECO:0000269" key="10">
    <source>
    </source>
</evidence>
<evidence type="ECO:0000269" key="11">
    <source>
    </source>
</evidence>
<evidence type="ECO:0000303" key="12">
    <source>
    </source>
</evidence>
<evidence type="ECO:0000305" key="13"/>
<evidence type="ECO:0000305" key="14">
    <source>
    </source>
</evidence>
<evidence type="ECO:0000312" key="15">
    <source>
        <dbReference type="HGNC" id="HGNC:597"/>
    </source>
</evidence>
<evidence type="ECO:0007829" key="16">
    <source>
        <dbReference type="PDB" id="3PMR"/>
    </source>
</evidence>
<evidence type="ECO:0007829" key="17">
    <source>
        <dbReference type="PDB" id="4RDA"/>
    </source>
</evidence>
<comment type="function">
    <text evidence="1">May play a role in postsynaptic function. The C-terminal gamma-secretase processed fragment, ALID1, activates transcription activation through APBB1 (Fe65) binding (By similarity). Couples to JIP signal transduction through C-terminal binding. May interact with cellular G-protein signaling pathways. Can regulate neurite outgrowth through binding to components of the extracellular matrix such as heparin and collagen I.</text>
</comment>
<comment type="function">
    <text evidence="1">The gamma-CTF peptide, C30, is a potent enhancer of neuronal apoptosis.</text>
</comment>
<comment type="subunit">
    <text evidence="1">Monomer and homodimer. Heparin binding promotes homodimerization. Binds, via its C-terminus, to the PID domain of several cytoplasmic proteins, including APBB and APBA family members, MAPK8IP1 and DAB1 (By similarity). Binding to Dab1 inhibits its serine phosphorylation (By similarity). Interacts with CPEB1. Interacts (via NPXY motif) with DAB2 (via PID domain); the interaction is impaired by tyrosine phosphorylation of the NPXY motif. Interacts (via NPXY motif) with DAB1 (By similarity).</text>
</comment>
<comment type="interaction">
    <interactant intactId="EBI-74648">
        <id>P51693</id>
    </interactant>
    <interactant intactId="EBI-74648">
        <id>P51693</id>
        <label>APLP1</label>
    </interactant>
    <organismsDiffer>false</organismsDiffer>
    <experiments>4</experiments>
</comment>
<comment type="interaction">
    <interactant intactId="EBI-74648">
        <id>P51693</id>
    </interactant>
    <interactant intactId="EBI-79306">
        <id>Q06481</id>
        <label>APLP2</label>
    </interactant>
    <organismsDiffer>false</organismsDiffer>
    <experiments>2</experiments>
</comment>
<comment type="interaction">
    <interactant intactId="EBI-74648">
        <id>P51693</id>
    </interactant>
    <interactant intactId="EBI-302641">
        <id>P05067-4</id>
        <label>APP</label>
    </interactant>
    <organismsDiffer>false</organismsDiffer>
    <experiments>2</experiments>
</comment>
<comment type="interaction">
    <interactant intactId="EBI-74648">
        <id>P51693</id>
    </interactant>
    <interactant intactId="EBI-394357">
        <id>Q93074</id>
        <label>MED12</label>
    </interactant>
    <organismsDiffer>false</organismsDiffer>
    <experiments>2</experiments>
</comment>
<comment type="interaction">
    <interactant intactId="EBI-74648">
        <id>P51693</id>
    </interactant>
    <interactant intactId="EBI-11141397">
        <id>Q9UBQ0-2</id>
        <label>VPS29</label>
    </interactant>
    <organismsDiffer>false</organismsDiffer>
    <experiments>3</experiments>
</comment>
<comment type="interaction">
    <interactant intactId="EBI-74648">
        <id>P51693</id>
    </interactant>
    <interactant intactId="EBI-707773">
        <id>P17028</id>
        <label>ZNF24</label>
    </interactant>
    <organismsDiffer>false</organismsDiffer>
    <experiments>2</experiments>
</comment>
<comment type="subcellular location">
    <subcellularLocation>
        <location>Cell membrane</location>
        <topology>Single-pass type I membrane protein</topology>
    </subcellularLocation>
</comment>
<comment type="subcellular location">
    <molecule>C30</molecule>
    <subcellularLocation>
        <location>Cytoplasm</location>
    </subcellularLocation>
    <text>C-terminally processed in the Golgi complex.</text>
</comment>
<comment type="alternative products">
    <event type="alternative splicing"/>
    <isoform>
        <id>P51693-1</id>
        <name>1</name>
        <sequence type="displayed"/>
    </isoform>
    <isoform>
        <id>P51693-2</id>
        <name>2</name>
        <sequence type="described" ref="VSP_039100"/>
    </isoform>
</comment>
<comment type="tissue specificity">
    <text evidence="11">Expressed in the cerebral cortex where it is localized to the postsynaptic density (PSD).</text>
</comment>
<comment type="domain">
    <text>The NPXY sequence motif found in many tyrosine-phosphorylated proteins is required for the specific binding of the PID domain. However, additional amino acids either N- or C-terminal to the NPXY motif are often required for complete interaction. The NPXY site is also involved in clathrin-mediated endocytosis.</text>
</comment>
<comment type="PTM">
    <text evidence="1">Proteolytically cleaved by caspases during neuronal apoptosis. Cleaved, in vitro, at Asp-620 by caspase-3 (By similarity).</text>
</comment>
<comment type="PTM">
    <text evidence="8 10">N- and O-glycosylated. O-glycosylation with core 1 or possibly core 8 glycans. Glycosylation on Ser-227 is the preferred site to Thr-228.</text>
</comment>
<comment type="miscellaneous">
    <text>Binds zinc and copper in the extracellular domain. Zinc-binding increases heparin binding. No Cu(2+) reducing activity with copper-binding.</text>
</comment>
<comment type="similarity">
    <text evidence="5">Belongs to the APP family.</text>
</comment>
<gene>
    <name type="primary">APLP1</name>
</gene>